<protein>
    <recommendedName>
        <fullName evidence="1">Cytosolic Fe-S cluster assembly factor CFD1</fullName>
    </recommendedName>
    <alternativeName>
        <fullName evidence="1">Cytosolic Fe-S cluster-deficient protein 1</fullName>
    </alternativeName>
</protein>
<evidence type="ECO:0000255" key="1">
    <source>
        <dbReference type="HAMAP-Rule" id="MF_03039"/>
    </source>
</evidence>
<evidence type="ECO:0000305" key="2"/>
<gene>
    <name evidence="1" type="primary">CFD1</name>
    <name type="ordered locus">ADL006W</name>
</gene>
<reference key="1">
    <citation type="journal article" date="2004" name="Science">
        <title>The Ashbya gossypii genome as a tool for mapping the ancient Saccharomyces cerevisiae genome.</title>
        <authorList>
            <person name="Dietrich F.S."/>
            <person name="Voegeli S."/>
            <person name="Brachat S."/>
            <person name="Lerch A."/>
            <person name="Gates K."/>
            <person name="Steiner S."/>
            <person name="Mohr C."/>
            <person name="Poehlmann R."/>
            <person name="Luedi P."/>
            <person name="Choi S."/>
            <person name="Wing R.A."/>
            <person name="Flavier A."/>
            <person name="Gaffney T.D."/>
            <person name="Philippsen P."/>
        </authorList>
    </citation>
    <scope>NUCLEOTIDE SEQUENCE [LARGE SCALE GENOMIC DNA]</scope>
    <source>
        <strain>ATCC 10895 / CBS 109.51 / FGSC 9923 / NRRL Y-1056</strain>
    </source>
</reference>
<reference key="2">
    <citation type="journal article" date="2013" name="G3 (Bethesda)">
        <title>Genomes of Ashbya fungi isolated from insects reveal four mating-type loci, numerous translocations, lack of transposons, and distinct gene duplications.</title>
        <authorList>
            <person name="Dietrich F.S."/>
            <person name="Voegeli S."/>
            <person name="Kuo S."/>
            <person name="Philippsen P."/>
        </authorList>
    </citation>
    <scope>GENOME REANNOTATION</scope>
    <source>
        <strain>ATCC 10895 / CBS 109.51 / FGSC 9923 / NRRL Y-1056</strain>
    </source>
</reference>
<proteinExistence type="inferred from homology"/>
<sequence>MAEEIVVEPESLREIEHIVLVLSGKGGVGKSSVTTQLGMALACRGLKVGILDIDLTGPSLPRMVGMEGKSVLQGPRGWIPVDVPTGMEQGCLRVMSLGFLLDDRGDSVVWRGPKKTAMIKQFISDVYWGALDYLLIDTPPGTSDEHISIAEELRGARPDGAIIVSTPQKVAVADVKKEINFCRKVNFKLLGVVENMSGFVCPHCSECTNIFARGGGESLALESGVPFLGTVPIDPAFVEMIESQSSREEPLISLYKTSGLYPIFARIVQHVLDQGIPSRCQ</sequence>
<accession>Q75AC3</accession>
<organism>
    <name type="scientific">Eremothecium gossypii (strain ATCC 10895 / CBS 109.51 / FGSC 9923 / NRRL Y-1056)</name>
    <name type="common">Yeast</name>
    <name type="synonym">Ashbya gossypii</name>
    <dbReference type="NCBI Taxonomy" id="284811"/>
    <lineage>
        <taxon>Eukaryota</taxon>
        <taxon>Fungi</taxon>
        <taxon>Dikarya</taxon>
        <taxon>Ascomycota</taxon>
        <taxon>Saccharomycotina</taxon>
        <taxon>Saccharomycetes</taxon>
        <taxon>Saccharomycetales</taxon>
        <taxon>Saccharomycetaceae</taxon>
        <taxon>Eremothecium</taxon>
    </lineage>
</organism>
<keyword id="KW-0004">4Fe-4S</keyword>
<keyword id="KW-0067">ATP-binding</keyword>
<keyword id="KW-0963">Cytoplasm</keyword>
<keyword id="KW-0408">Iron</keyword>
<keyword id="KW-0411">Iron-sulfur</keyword>
<keyword id="KW-0479">Metal-binding</keyword>
<keyword id="KW-0547">Nucleotide-binding</keyword>
<keyword id="KW-1185">Reference proteome</keyword>
<feature type="chain" id="PRO_0000278868" description="Cytosolic Fe-S cluster assembly factor CFD1">
    <location>
        <begin position="1"/>
        <end position="281"/>
    </location>
</feature>
<feature type="binding site" evidence="1">
    <location>
        <begin position="24"/>
        <end position="31"/>
    </location>
    <ligand>
        <name>ATP</name>
        <dbReference type="ChEBI" id="CHEBI:30616"/>
    </ligand>
</feature>
<feature type="binding site" evidence="1">
    <location>
        <position position="201"/>
    </location>
    <ligand>
        <name>[4Fe-4S] cluster</name>
        <dbReference type="ChEBI" id="CHEBI:49883"/>
        <note>ligand shared between dimeric partners</note>
    </ligand>
</feature>
<feature type="binding site" evidence="1">
    <location>
        <position position="204"/>
    </location>
    <ligand>
        <name>[4Fe-4S] cluster</name>
        <dbReference type="ChEBI" id="CHEBI:49883"/>
        <note>ligand shared between dimeric partners</note>
    </ligand>
</feature>
<name>CFD1_EREGS</name>
<dbReference type="EMBL" id="AE016817">
    <property type="protein sequence ID" value="AAS51915.1"/>
    <property type="status" value="ALT_INIT"/>
    <property type="molecule type" value="Genomic_DNA"/>
</dbReference>
<dbReference type="RefSeq" id="NP_984091.1">
    <property type="nucleotide sequence ID" value="NM_209444.1"/>
</dbReference>
<dbReference type="SMR" id="Q75AC3"/>
<dbReference type="FunCoup" id="Q75AC3">
    <property type="interactions" value="169"/>
</dbReference>
<dbReference type="STRING" id="284811.Q75AC3"/>
<dbReference type="GeneID" id="4620239"/>
<dbReference type="KEGG" id="ago:AGOS_ADL006W"/>
<dbReference type="eggNOG" id="KOG3022">
    <property type="taxonomic scope" value="Eukaryota"/>
</dbReference>
<dbReference type="InParanoid" id="Q75AC3"/>
<dbReference type="OrthoDB" id="3900342at2759"/>
<dbReference type="Proteomes" id="UP000000591">
    <property type="component" value="Chromosome IV"/>
</dbReference>
<dbReference type="GO" id="GO:0005829">
    <property type="term" value="C:cytosol"/>
    <property type="evidence" value="ECO:0000318"/>
    <property type="project" value="GO_Central"/>
</dbReference>
<dbReference type="GO" id="GO:0051539">
    <property type="term" value="F:4 iron, 4 sulfur cluster binding"/>
    <property type="evidence" value="ECO:0007669"/>
    <property type="project" value="UniProtKB-UniRule"/>
</dbReference>
<dbReference type="GO" id="GO:0005524">
    <property type="term" value="F:ATP binding"/>
    <property type="evidence" value="ECO:0007669"/>
    <property type="project" value="UniProtKB-KW"/>
</dbReference>
<dbReference type="GO" id="GO:0140663">
    <property type="term" value="F:ATP-dependent FeS chaperone activity"/>
    <property type="evidence" value="ECO:0007669"/>
    <property type="project" value="InterPro"/>
</dbReference>
<dbReference type="GO" id="GO:0051536">
    <property type="term" value="F:iron-sulfur cluster binding"/>
    <property type="evidence" value="ECO:0000318"/>
    <property type="project" value="GO_Central"/>
</dbReference>
<dbReference type="GO" id="GO:0046872">
    <property type="term" value="F:metal ion binding"/>
    <property type="evidence" value="ECO:0007669"/>
    <property type="project" value="UniProtKB-KW"/>
</dbReference>
<dbReference type="GO" id="GO:0016226">
    <property type="term" value="P:iron-sulfur cluster assembly"/>
    <property type="evidence" value="ECO:0000318"/>
    <property type="project" value="GO_Central"/>
</dbReference>
<dbReference type="CDD" id="cd02037">
    <property type="entry name" value="Mrp_NBP35"/>
    <property type="match status" value="1"/>
</dbReference>
<dbReference type="FunFam" id="3.40.50.300:FF:001300">
    <property type="entry name" value="Cytosolic Fe-S cluster assembly factor CFD1"/>
    <property type="match status" value="1"/>
</dbReference>
<dbReference type="Gene3D" id="3.40.50.300">
    <property type="entry name" value="P-loop containing nucleotide triphosphate hydrolases"/>
    <property type="match status" value="1"/>
</dbReference>
<dbReference type="HAMAP" id="MF_02040">
    <property type="entry name" value="Mrp_NBP35"/>
    <property type="match status" value="1"/>
</dbReference>
<dbReference type="HAMAP" id="MF_03039">
    <property type="entry name" value="NUBP2"/>
    <property type="match status" value="1"/>
</dbReference>
<dbReference type="InterPro" id="IPR000808">
    <property type="entry name" value="Mrp-like_CS"/>
</dbReference>
<dbReference type="InterPro" id="IPR019591">
    <property type="entry name" value="Mrp/NBP35_ATP-bd"/>
</dbReference>
<dbReference type="InterPro" id="IPR028600">
    <property type="entry name" value="NUBP2/Cfd1_eukaryotes"/>
</dbReference>
<dbReference type="InterPro" id="IPR027417">
    <property type="entry name" value="P-loop_NTPase"/>
</dbReference>
<dbReference type="InterPro" id="IPR033756">
    <property type="entry name" value="YlxH/NBP35"/>
</dbReference>
<dbReference type="PANTHER" id="PTHR23264:SF19">
    <property type="entry name" value="CYTOSOLIC FE-S CLUSTER ASSEMBLY FACTOR NUBP2"/>
    <property type="match status" value="1"/>
</dbReference>
<dbReference type="PANTHER" id="PTHR23264">
    <property type="entry name" value="NUCLEOTIDE-BINDING PROTEIN NBP35 YEAST -RELATED"/>
    <property type="match status" value="1"/>
</dbReference>
<dbReference type="Pfam" id="PF10609">
    <property type="entry name" value="ParA"/>
    <property type="match status" value="1"/>
</dbReference>
<dbReference type="SUPFAM" id="SSF52540">
    <property type="entry name" value="P-loop containing nucleoside triphosphate hydrolases"/>
    <property type="match status" value="1"/>
</dbReference>
<dbReference type="PROSITE" id="PS01215">
    <property type="entry name" value="MRP"/>
    <property type="match status" value="1"/>
</dbReference>
<comment type="function">
    <text evidence="1">Component of the cytosolic iron-sulfur (Fe/S) protein assembly (CIA) machinery. Required for maturation of extramitochondrial Fe-S proteins. The NBP35-CFD1 heterotetramer forms a Fe-S scaffold complex, mediating the de novo assembly of an Fe-S cluster and its transfer to target apoproteins. Required for biogenesis and export of both ribosomal subunits, which may reflect a role in assembly of the Fe/S clusters in RLI1, a protein which performs rRNA processing and ribosome export.</text>
</comment>
<comment type="cofactor">
    <cofactor evidence="1">
        <name>[4Fe-4S] cluster</name>
        <dbReference type="ChEBI" id="CHEBI:49883"/>
    </cofactor>
    <text evidence="1">Binds 4 [4Fe-4S] clusters per heterotetramer. Contains two stable clusters in the N-termini of NBP35 and two labile, bridging clusters between subunits of the NBP35-CFD1 heterotetramer.</text>
</comment>
<comment type="subunit">
    <text evidence="1">Heterotetramer of 2 NBP35 and 2 CFD1 chains.</text>
</comment>
<comment type="subcellular location">
    <subcellularLocation>
        <location evidence="1">Cytoplasm</location>
    </subcellularLocation>
</comment>
<comment type="similarity">
    <text evidence="1">Belongs to the Mrp/NBP35 ATP-binding proteins family. NUBP2/CFD1 subfamily.</text>
</comment>
<comment type="sequence caution" evidence="2">
    <conflict type="erroneous initiation">
        <sequence resource="EMBL-CDS" id="AAS51915"/>
    </conflict>
</comment>